<reference key="1">
    <citation type="journal article" date="2002" name="J. Bacteriol.">
        <title>Whole-genome comparison of Mycobacterium tuberculosis clinical and laboratory strains.</title>
        <authorList>
            <person name="Fleischmann R.D."/>
            <person name="Alland D."/>
            <person name="Eisen J.A."/>
            <person name="Carpenter L."/>
            <person name="White O."/>
            <person name="Peterson J.D."/>
            <person name="DeBoy R.T."/>
            <person name="Dodson R.J."/>
            <person name="Gwinn M.L."/>
            <person name="Haft D.H."/>
            <person name="Hickey E.K."/>
            <person name="Kolonay J.F."/>
            <person name="Nelson W.C."/>
            <person name="Umayam L.A."/>
            <person name="Ermolaeva M.D."/>
            <person name="Salzberg S.L."/>
            <person name="Delcher A."/>
            <person name="Utterback T.R."/>
            <person name="Weidman J.F."/>
            <person name="Khouri H.M."/>
            <person name="Gill J."/>
            <person name="Mikula A."/>
            <person name="Bishai W."/>
            <person name="Jacobs W.R. Jr."/>
            <person name="Venter J.C."/>
            <person name="Fraser C.M."/>
        </authorList>
    </citation>
    <scope>NUCLEOTIDE SEQUENCE [LARGE SCALE GENOMIC DNA]</scope>
    <source>
        <strain>CDC 1551 / Oshkosh</strain>
    </source>
</reference>
<sequence length="553" mass="57088">MAFSVQMPALGESVTEGTVTRWLKQEGDTVELDEPLVEVSTDKVDTEIPSPAAGVLTKIIAQEDDTVEVGGELAVIGDAKDAGEAAAPAPEKVPAAQPESKPAPEPPPVQPTSGAPAGGDAKPVLMPELGESVTEGTVIRWLKKIGDSVQVDEPLVEVSTDKVDTEIPSPVAGVLVSISADEDATVPVGGELARIGVAADIGAAPAPKPAPKPVPEPAPTPKAEPAPSPPAAQPAGAAEGAPYVTPLVRKLASENNIDLAGVTGTGVGGRIRKQDVLAAAEQKKRAKAPAPAAQAAAAPAPKAPPAPAPALAHLRGTTQKASRIRQITANKTRESLQATAQLTQTHEVDMTKIVGLRARAKAAFAEREGVNLTFLPFFAKAVIDALKIHPNINASYNEDTKEITYYDAEHLGFAVDTEQGLLSPVIHDAGDLSLAGLARAIADIAARARSGNLKPDELSGGTFTITNIGSQGALFDTPILVPPQAAMLGTGAIVKRPRVVVDASGNESIGVRSVCYLPLTYDHRLIDGADAGRFLTTIKHRLEEGAFEADLGL</sequence>
<proteinExistence type="inferred from homology"/>
<name>ODP2_MYCTO</name>
<comment type="function">
    <text evidence="1">Component of the pyruvate dehydrogenase (PDH) complex, that catalyzes the overall conversion of pyruvate to acetyl-CoA and CO(2).</text>
</comment>
<comment type="function">
    <text evidence="1">Together with AhpC, AhpD and Lpd, constitutes an NADH-dependent peroxidase active against hydrogen and alkyl peroxides as well as serving as a peroxynitrite reductase, thus protecting the bacterium against reactive nitrogen intermediates and oxidative stress generated by the host immune system.</text>
</comment>
<comment type="function">
    <text evidence="1">Appears to be essential for Mtb pathogenesis.</text>
</comment>
<comment type="catalytic activity">
    <reaction>
        <text>N(6)-[(R)-dihydrolipoyl]-L-lysyl-[protein] + acetyl-CoA = N(6)-[(R)-S(8)-acetyldihydrolipoyl]-L-lysyl-[protein] + CoA</text>
        <dbReference type="Rhea" id="RHEA:17017"/>
        <dbReference type="Rhea" id="RHEA-COMP:10475"/>
        <dbReference type="Rhea" id="RHEA-COMP:10478"/>
        <dbReference type="ChEBI" id="CHEBI:57287"/>
        <dbReference type="ChEBI" id="CHEBI:57288"/>
        <dbReference type="ChEBI" id="CHEBI:83100"/>
        <dbReference type="ChEBI" id="CHEBI:83111"/>
        <dbReference type="EC" id="2.3.1.12"/>
    </reaction>
</comment>
<comment type="cofactor">
    <cofactor evidence="1">
        <name>(R)-lipoate</name>
        <dbReference type="ChEBI" id="CHEBI:83088"/>
    </cofactor>
    <text evidence="1">Binds 2 lipoyl cofactors covalently.</text>
</comment>
<comment type="subunit">
    <text evidence="1">Forms a 24-polypeptide structural core with octahedral symmetry.</text>
</comment>
<comment type="similarity">
    <text evidence="5">Belongs to the 2-oxoacid dehydrogenase family.</text>
</comment>
<accession>P9WIS6</accession>
<accession>L0TBM6</accession>
<accession>P65633</accession>
<accession>Q10381</accession>
<protein>
    <recommendedName>
        <fullName>Dihydrolipoyllysine-residue acetyltransferase component of pyruvate dehydrogenase complex</fullName>
        <ecNumber>2.3.1.12</ecNumber>
    </recommendedName>
    <alternativeName>
        <fullName>Component of peroxynitrite reductase/peroxidase complex</fullName>
        <shortName>Component of PNR/P</shortName>
    </alternativeName>
    <alternativeName>
        <fullName>Dihydrolipoamide acetyltransferase component of pyruvate dehydrogenase complex</fullName>
    </alternativeName>
    <alternativeName>
        <fullName>Pyruvate dehydrogenase complex component E2</fullName>
        <shortName>PDH component E2</shortName>
    </alternativeName>
</protein>
<keyword id="KW-0012">Acyltransferase</keyword>
<keyword id="KW-0049">Antioxidant</keyword>
<keyword id="KW-0450">Lipoyl</keyword>
<keyword id="KW-1185">Reference proteome</keyword>
<keyword id="KW-0677">Repeat</keyword>
<keyword id="KW-0808">Transferase</keyword>
<keyword id="KW-0843">Virulence</keyword>
<gene>
    <name type="primary">dlaT</name>
    <name type="synonym">sucB</name>
    <name type="ordered locus">MT2272</name>
</gene>
<dbReference type="EC" id="2.3.1.12"/>
<dbReference type="EMBL" id="AE000516">
    <property type="protein sequence ID" value="AAK46557.1"/>
    <property type="molecule type" value="Genomic_DNA"/>
</dbReference>
<dbReference type="PIR" id="H70786">
    <property type="entry name" value="H70786"/>
</dbReference>
<dbReference type="RefSeq" id="WP_003411450.1">
    <property type="nucleotide sequence ID" value="NZ_KK341227.1"/>
</dbReference>
<dbReference type="SMR" id="P9WIS6"/>
<dbReference type="KEGG" id="mtc:MT2272"/>
<dbReference type="PATRIC" id="fig|83331.31.peg.2446"/>
<dbReference type="HOGENOM" id="CLU_016733_10_1_11"/>
<dbReference type="Proteomes" id="UP000001020">
    <property type="component" value="Chromosome"/>
</dbReference>
<dbReference type="GO" id="GO:0005737">
    <property type="term" value="C:cytoplasm"/>
    <property type="evidence" value="ECO:0007669"/>
    <property type="project" value="TreeGrafter"/>
</dbReference>
<dbReference type="GO" id="GO:0016209">
    <property type="term" value="F:antioxidant activity"/>
    <property type="evidence" value="ECO:0007669"/>
    <property type="project" value="UniProtKB-KW"/>
</dbReference>
<dbReference type="GO" id="GO:0004742">
    <property type="term" value="F:dihydrolipoyllysine-residue acetyltransferase activity"/>
    <property type="evidence" value="ECO:0007669"/>
    <property type="project" value="UniProtKB-EC"/>
</dbReference>
<dbReference type="GO" id="GO:0031405">
    <property type="term" value="F:lipoic acid binding"/>
    <property type="evidence" value="ECO:0007669"/>
    <property type="project" value="TreeGrafter"/>
</dbReference>
<dbReference type="CDD" id="cd06849">
    <property type="entry name" value="lipoyl_domain"/>
    <property type="match status" value="2"/>
</dbReference>
<dbReference type="FunFam" id="2.40.50.100:FF:000023">
    <property type="entry name" value="Dihydrolipoamide acetyltransferase component of pyruvate dehydrogenase complex"/>
    <property type="match status" value="1"/>
</dbReference>
<dbReference type="FunFam" id="3.30.559.10:FF:000039">
    <property type="entry name" value="Dihydrolipoamide acetyltransferase component of pyruvate dehydrogenase complex"/>
    <property type="match status" value="1"/>
</dbReference>
<dbReference type="FunFam" id="4.10.320.10:FF:000008">
    <property type="entry name" value="Dihydrolipoamide acetyltransferase component of pyruvate dehydrogenase complex"/>
    <property type="match status" value="1"/>
</dbReference>
<dbReference type="Gene3D" id="2.40.50.100">
    <property type="match status" value="2"/>
</dbReference>
<dbReference type="Gene3D" id="3.30.559.10">
    <property type="entry name" value="Chloramphenicol acetyltransferase-like domain"/>
    <property type="match status" value="1"/>
</dbReference>
<dbReference type="Gene3D" id="4.10.320.10">
    <property type="entry name" value="E3-binding domain"/>
    <property type="match status" value="1"/>
</dbReference>
<dbReference type="InterPro" id="IPR003016">
    <property type="entry name" value="2-oxoA_DH_lipoyl-BS"/>
</dbReference>
<dbReference type="InterPro" id="IPR001078">
    <property type="entry name" value="2-oxoacid_DH_actylTfrase"/>
</dbReference>
<dbReference type="InterPro" id="IPR050743">
    <property type="entry name" value="2-oxoacid_DH_E2_comp"/>
</dbReference>
<dbReference type="InterPro" id="IPR014276">
    <property type="entry name" value="2-oxoglutarate_DH_E2"/>
</dbReference>
<dbReference type="InterPro" id="IPR000089">
    <property type="entry name" value="Biotin_lipoyl"/>
</dbReference>
<dbReference type="InterPro" id="IPR023213">
    <property type="entry name" value="CAT-like_dom_sf"/>
</dbReference>
<dbReference type="InterPro" id="IPR036625">
    <property type="entry name" value="E3-bd_dom_sf"/>
</dbReference>
<dbReference type="InterPro" id="IPR004167">
    <property type="entry name" value="PSBD"/>
</dbReference>
<dbReference type="InterPro" id="IPR011053">
    <property type="entry name" value="Single_hybrid_motif"/>
</dbReference>
<dbReference type="NCBIfam" id="TIGR02927">
    <property type="entry name" value="SucB_Actino"/>
    <property type="match status" value="1"/>
</dbReference>
<dbReference type="PANTHER" id="PTHR43178">
    <property type="entry name" value="DIHYDROLIPOAMIDE ACETYLTRANSFERASE COMPONENT OF PYRUVATE DEHYDROGENASE COMPLEX"/>
    <property type="match status" value="1"/>
</dbReference>
<dbReference type="PANTHER" id="PTHR43178:SF5">
    <property type="entry name" value="LIPOAMIDE ACYLTRANSFERASE COMPONENT OF BRANCHED-CHAIN ALPHA-KETO ACID DEHYDROGENASE COMPLEX, MITOCHONDRIAL"/>
    <property type="match status" value="1"/>
</dbReference>
<dbReference type="Pfam" id="PF00198">
    <property type="entry name" value="2-oxoacid_dh"/>
    <property type="match status" value="1"/>
</dbReference>
<dbReference type="Pfam" id="PF00364">
    <property type="entry name" value="Biotin_lipoyl"/>
    <property type="match status" value="2"/>
</dbReference>
<dbReference type="Pfam" id="PF02817">
    <property type="entry name" value="E3_binding"/>
    <property type="match status" value="1"/>
</dbReference>
<dbReference type="SUPFAM" id="SSF52777">
    <property type="entry name" value="CoA-dependent acyltransferases"/>
    <property type="match status" value="1"/>
</dbReference>
<dbReference type="SUPFAM" id="SSF47005">
    <property type="entry name" value="Peripheral subunit-binding domain of 2-oxo acid dehydrogenase complex"/>
    <property type="match status" value="1"/>
</dbReference>
<dbReference type="SUPFAM" id="SSF51230">
    <property type="entry name" value="Single hybrid motif"/>
    <property type="match status" value="2"/>
</dbReference>
<dbReference type="PROSITE" id="PS50968">
    <property type="entry name" value="BIOTINYL_LIPOYL"/>
    <property type="match status" value="2"/>
</dbReference>
<dbReference type="PROSITE" id="PS00189">
    <property type="entry name" value="LIPOYL"/>
    <property type="match status" value="2"/>
</dbReference>
<dbReference type="PROSITE" id="PS51826">
    <property type="entry name" value="PSBD"/>
    <property type="match status" value="1"/>
</dbReference>
<evidence type="ECO:0000250" key="1"/>
<evidence type="ECO:0000255" key="2">
    <source>
        <dbReference type="PROSITE-ProRule" id="PRU01066"/>
    </source>
</evidence>
<evidence type="ECO:0000255" key="3">
    <source>
        <dbReference type="PROSITE-ProRule" id="PRU01170"/>
    </source>
</evidence>
<evidence type="ECO:0000256" key="4">
    <source>
        <dbReference type="SAM" id="MobiDB-lite"/>
    </source>
</evidence>
<evidence type="ECO:0000305" key="5"/>
<organism>
    <name type="scientific">Mycobacterium tuberculosis (strain CDC 1551 / Oshkosh)</name>
    <dbReference type="NCBI Taxonomy" id="83331"/>
    <lineage>
        <taxon>Bacteria</taxon>
        <taxon>Bacillati</taxon>
        <taxon>Actinomycetota</taxon>
        <taxon>Actinomycetes</taxon>
        <taxon>Mycobacteriales</taxon>
        <taxon>Mycobacteriaceae</taxon>
        <taxon>Mycobacterium</taxon>
        <taxon>Mycobacterium tuberculosis complex</taxon>
    </lineage>
</organism>
<feature type="chain" id="PRO_0000427953" description="Dihydrolipoyllysine-residue acetyltransferase component of pyruvate dehydrogenase complex">
    <location>
        <begin position="1"/>
        <end position="553"/>
    </location>
</feature>
<feature type="domain" description="Lipoyl-binding 1" evidence="2">
    <location>
        <begin position="2"/>
        <end position="77"/>
    </location>
</feature>
<feature type="domain" description="Lipoyl-binding 2" evidence="2">
    <location>
        <begin position="121"/>
        <end position="196"/>
    </location>
</feature>
<feature type="domain" description="Peripheral subunit-binding (PSBD)" evidence="3">
    <location>
        <begin position="243"/>
        <end position="280"/>
    </location>
</feature>
<feature type="region of interest" description="Disordered" evidence="4">
    <location>
        <begin position="81"/>
        <end position="125"/>
    </location>
</feature>
<feature type="region of interest" description="Disordered" evidence="4">
    <location>
        <begin position="204"/>
        <end position="238"/>
    </location>
</feature>
<feature type="region of interest" description="Disordered" evidence="4">
    <location>
        <begin position="278"/>
        <end position="321"/>
    </location>
</feature>
<feature type="compositionally biased region" description="Low complexity" evidence="4">
    <location>
        <begin position="84"/>
        <end position="100"/>
    </location>
</feature>
<feature type="compositionally biased region" description="Pro residues" evidence="4">
    <location>
        <begin position="101"/>
        <end position="110"/>
    </location>
</feature>
<feature type="compositionally biased region" description="Pro residues" evidence="4">
    <location>
        <begin position="206"/>
        <end position="232"/>
    </location>
</feature>
<feature type="compositionally biased region" description="Low complexity" evidence="4">
    <location>
        <begin position="288"/>
        <end position="300"/>
    </location>
</feature>
<feature type="active site" evidence="1">
    <location>
        <position position="523"/>
    </location>
</feature>
<feature type="active site" evidence="1">
    <location>
        <position position="527"/>
    </location>
</feature>
<feature type="modified residue" description="N6-lipoyllysine" evidence="2">
    <location>
        <position position="43"/>
    </location>
</feature>
<feature type="modified residue" description="N6-lipoyllysine" evidence="2">
    <location>
        <position position="162"/>
    </location>
</feature>